<comment type="function">
    <text evidence="1">May have metallophosphoesterase activity (in vitro).</text>
</comment>
<comment type="interaction">
    <interactant intactId="EBI-12183511">
        <id>O15442-2</id>
    </interactant>
    <interactant intactId="EBI-946080">
        <id>Q9BSU1</id>
        <label>PHAF1</label>
    </interactant>
    <organismsDiffer>false</organismsDiffer>
    <experiments>3</experiments>
</comment>
<comment type="interaction">
    <interactant intactId="EBI-12183511">
        <id>O15442-2</id>
    </interactant>
    <interactant intactId="EBI-527853">
        <id>Q9UGI0</id>
        <label>ZRANB1</label>
    </interactant>
    <organismsDiffer>false</organismsDiffer>
    <experiments>3</experiments>
</comment>
<comment type="alternative products">
    <event type="alternative splicing"/>
    <isoform>
        <id>O15442-1</id>
        <name>1</name>
        <sequence type="displayed"/>
    </isoform>
    <isoform>
        <id>O15442-2</id>
        <name>2</name>
        <sequence type="described" ref="VSP_056871"/>
    </isoform>
</comment>
<comment type="tissue specificity">
    <text>Expressed predominantly in adult brain.</text>
</comment>
<comment type="similarity">
    <text evidence="3">Belongs to the UPF0046 family.</text>
</comment>
<comment type="sequence caution" evidence="3">
    <conflict type="frameshift">
        <sequence resource="EMBL-CDS" id="AAC51673"/>
    </conflict>
</comment>
<sequence>MWRSRWDASVLKAEALALLPCGLGMAFSQSHVMAARRHQHSRLIIEVDEYSSNPTQAFTFYNINQGRFQPPHVQMVDPVPHDAPKPPGYTRFVCVSDTHSRTDPIQMPYGDVLIHAGDFTELGLPSEVKKFNEWLGSLPYEYKIVIAGNHELTFDQEFMADLIKQDFYYFPSVSKLKPENYENVQSLLTNCIYLQDSEVTVRGFRIYGSPWQPWFYGWGFNLPRGQALLEKWNLIPEGVDILITHGPPLGFLDWVPKKMQRVGCVELLNTVQRRVQPRLHVFGHIHEGYGVMADGTTTYVNASVCTVNYQPVNPPIVIDLPTPRNS</sequence>
<accession>O15442</accession>
<accession>A8K159</accession>
<accession>B7Z2S9</accession>
<accession>Q8N361</accession>
<protein>
    <recommendedName>
        <fullName>Metallophosphoesterase domain-containing protein 1</fullName>
        <ecNumber>3.1.-.-</ecNumber>
    </recommendedName>
    <alternativeName>
        <fullName>Adult brain protein 239</fullName>
        <shortName>239AB</shortName>
    </alternativeName>
</protein>
<proteinExistence type="evidence at protein level"/>
<feature type="chain" id="PRO_0000053403" description="Metallophosphoesterase domain-containing protein 1">
    <location>
        <begin position="1"/>
        <end position="326"/>
    </location>
</feature>
<feature type="splice variant" id="VSP_056871" description="In isoform 2." evidence="2">
    <original>M</original>
    <variation>MNGRETQSVSRSGGGPGCGGGSGGRCRGGRRRSM</variation>
    <location>
        <position position="1"/>
    </location>
</feature>
<organism>
    <name type="scientific">Homo sapiens</name>
    <name type="common">Human</name>
    <dbReference type="NCBI Taxonomy" id="9606"/>
    <lineage>
        <taxon>Eukaryota</taxon>
        <taxon>Metazoa</taxon>
        <taxon>Chordata</taxon>
        <taxon>Craniata</taxon>
        <taxon>Vertebrata</taxon>
        <taxon>Euteleostomi</taxon>
        <taxon>Mammalia</taxon>
        <taxon>Eutheria</taxon>
        <taxon>Euarchontoglires</taxon>
        <taxon>Primates</taxon>
        <taxon>Haplorrhini</taxon>
        <taxon>Catarrhini</taxon>
        <taxon>Hominidae</taxon>
        <taxon>Homo</taxon>
    </lineage>
</organism>
<reference key="1">
    <citation type="journal article" date="1997" name="Gene">
        <title>The 239AB gene on chromosome 22: a novel member of an ancient gene family.</title>
        <authorList>
            <person name="Schwartz F."/>
            <person name="Ota T."/>
        </authorList>
    </citation>
    <scope>NUCLEOTIDE SEQUENCE [MRNA] (ISOFORM 1)</scope>
    <source>
        <tissue>Brain</tissue>
    </source>
</reference>
<reference key="2">
    <citation type="journal article" date="2004" name="Nat. Genet.">
        <title>Complete sequencing and characterization of 21,243 full-length human cDNAs.</title>
        <authorList>
            <person name="Ota T."/>
            <person name="Suzuki Y."/>
            <person name="Nishikawa T."/>
            <person name="Otsuki T."/>
            <person name="Sugiyama T."/>
            <person name="Irie R."/>
            <person name="Wakamatsu A."/>
            <person name="Hayashi K."/>
            <person name="Sato H."/>
            <person name="Nagai K."/>
            <person name="Kimura K."/>
            <person name="Makita H."/>
            <person name="Sekine M."/>
            <person name="Obayashi M."/>
            <person name="Nishi T."/>
            <person name="Shibahara T."/>
            <person name="Tanaka T."/>
            <person name="Ishii S."/>
            <person name="Yamamoto J."/>
            <person name="Saito K."/>
            <person name="Kawai Y."/>
            <person name="Isono Y."/>
            <person name="Nakamura Y."/>
            <person name="Nagahari K."/>
            <person name="Murakami K."/>
            <person name="Yasuda T."/>
            <person name="Iwayanagi T."/>
            <person name="Wagatsuma M."/>
            <person name="Shiratori A."/>
            <person name="Sudo H."/>
            <person name="Hosoiri T."/>
            <person name="Kaku Y."/>
            <person name="Kodaira H."/>
            <person name="Kondo H."/>
            <person name="Sugawara M."/>
            <person name="Takahashi M."/>
            <person name="Kanda K."/>
            <person name="Yokoi T."/>
            <person name="Furuya T."/>
            <person name="Kikkawa E."/>
            <person name="Omura Y."/>
            <person name="Abe K."/>
            <person name="Kamihara K."/>
            <person name="Katsuta N."/>
            <person name="Sato K."/>
            <person name="Tanikawa M."/>
            <person name="Yamazaki M."/>
            <person name="Ninomiya K."/>
            <person name="Ishibashi T."/>
            <person name="Yamashita H."/>
            <person name="Murakawa K."/>
            <person name="Fujimori K."/>
            <person name="Tanai H."/>
            <person name="Kimata M."/>
            <person name="Watanabe M."/>
            <person name="Hiraoka S."/>
            <person name="Chiba Y."/>
            <person name="Ishida S."/>
            <person name="Ono Y."/>
            <person name="Takiguchi S."/>
            <person name="Watanabe S."/>
            <person name="Yosida M."/>
            <person name="Hotuta T."/>
            <person name="Kusano J."/>
            <person name="Kanehori K."/>
            <person name="Takahashi-Fujii A."/>
            <person name="Hara H."/>
            <person name="Tanase T.-O."/>
            <person name="Nomura Y."/>
            <person name="Togiya S."/>
            <person name="Komai F."/>
            <person name="Hara R."/>
            <person name="Takeuchi K."/>
            <person name="Arita M."/>
            <person name="Imose N."/>
            <person name="Musashino K."/>
            <person name="Yuuki H."/>
            <person name="Oshima A."/>
            <person name="Sasaki N."/>
            <person name="Aotsuka S."/>
            <person name="Yoshikawa Y."/>
            <person name="Matsunawa H."/>
            <person name="Ichihara T."/>
            <person name="Shiohata N."/>
            <person name="Sano S."/>
            <person name="Moriya S."/>
            <person name="Momiyama H."/>
            <person name="Satoh N."/>
            <person name="Takami S."/>
            <person name="Terashima Y."/>
            <person name="Suzuki O."/>
            <person name="Nakagawa S."/>
            <person name="Senoh A."/>
            <person name="Mizoguchi H."/>
            <person name="Goto Y."/>
            <person name="Shimizu F."/>
            <person name="Wakebe H."/>
            <person name="Hishigaki H."/>
            <person name="Watanabe T."/>
            <person name="Sugiyama A."/>
            <person name="Takemoto M."/>
            <person name="Kawakami B."/>
            <person name="Yamazaki M."/>
            <person name="Watanabe K."/>
            <person name="Kumagai A."/>
            <person name="Itakura S."/>
            <person name="Fukuzumi Y."/>
            <person name="Fujimori Y."/>
            <person name="Komiyama M."/>
            <person name="Tashiro H."/>
            <person name="Tanigami A."/>
            <person name="Fujiwara T."/>
            <person name="Ono T."/>
            <person name="Yamada K."/>
            <person name="Fujii Y."/>
            <person name="Ozaki K."/>
            <person name="Hirao M."/>
            <person name="Ohmori Y."/>
            <person name="Kawabata A."/>
            <person name="Hikiji T."/>
            <person name="Kobatake N."/>
            <person name="Inagaki H."/>
            <person name="Ikema Y."/>
            <person name="Okamoto S."/>
            <person name="Okitani R."/>
            <person name="Kawakami T."/>
            <person name="Noguchi S."/>
            <person name="Itoh T."/>
            <person name="Shigeta K."/>
            <person name="Senba T."/>
            <person name="Matsumura K."/>
            <person name="Nakajima Y."/>
            <person name="Mizuno T."/>
            <person name="Morinaga M."/>
            <person name="Sasaki M."/>
            <person name="Togashi T."/>
            <person name="Oyama M."/>
            <person name="Hata H."/>
            <person name="Watanabe M."/>
            <person name="Komatsu T."/>
            <person name="Mizushima-Sugano J."/>
            <person name="Satoh T."/>
            <person name="Shirai Y."/>
            <person name="Takahashi Y."/>
            <person name="Nakagawa K."/>
            <person name="Okumura K."/>
            <person name="Nagase T."/>
            <person name="Nomura N."/>
            <person name="Kikuchi H."/>
            <person name="Masuho Y."/>
            <person name="Yamashita R."/>
            <person name="Nakai K."/>
            <person name="Yada T."/>
            <person name="Nakamura Y."/>
            <person name="Ohara O."/>
            <person name="Isogai T."/>
            <person name="Sugano S."/>
        </authorList>
    </citation>
    <scope>NUCLEOTIDE SEQUENCE [LARGE SCALE MRNA] (ISOFORMS 1 AND 2)</scope>
    <source>
        <tissue>Brain</tissue>
    </source>
</reference>
<reference key="3">
    <citation type="journal article" date="1999" name="Nature">
        <title>The DNA sequence of human chromosome 22.</title>
        <authorList>
            <person name="Dunham I."/>
            <person name="Hunt A.R."/>
            <person name="Collins J.E."/>
            <person name="Bruskiewich R."/>
            <person name="Beare D.M."/>
            <person name="Clamp M."/>
            <person name="Smink L.J."/>
            <person name="Ainscough R."/>
            <person name="Almeida J.P."/>
            <person name="Babbage A.K."/>
            <person name="Bagguley C."/>
            <person name="Bailey J."/>
            <person name="Barlow K.F."/>
            <person name="Bates K.N."/>
            <person name="Beasley O.P."/>
            <person name="Bird C.P."/>
            <person name="Blakey S.E."/>
            <person name="Bridgeman A.M."/>
            <person name="Buck D."/>
            <person name="Burgess J."/>
            <person name="Burrill W.D."/>
            <person name="Burton J."/>
            <person name="Carder C."/>
            <person name="Carter N.P."/>
            <person name="Chen Y."/>
            <person name="Clark G."/>
            <person name="Clegg S.M."/>
            <person name="Cobley V.E."/>
            <person name="Cole C.G."/>
            <person name="Collier R.E."/>
            <person name="Connor R."/>
            <person name="Conroy D."/>
            <person name="Corby N.R."/>
            <person name="Coville G.J."/>
            <person name="Cox A.V."/>
            <person name="Davis J."/>
            <person name="Dawson E."/>
            <person name="Dhami P.D."/>
            <person name="Dockree C."/>
            <person name="Dodsworth S.J."/>
            <person name="Durbin R.M."/>
            <person name="Ellington A.G."/>
            <person name="Evans K.L."/>
            <person name="Fey J.M."/>
            <person name="Fleming K."/>
            <person name="French L."/>
            <person name="Garner A.A."/>
            <person name="Gilbert J.G.R."/>
            <person name="Goward M.E."/>
            <person name="Grafham D.V."/>
            <person name="Griffiths M.N.D."/>
            <person name="Hall C."/>
            <person name="Hall R.E."/>
            <person name="Hall-Tamlyn G."/>
            <person name="Heathcott R.W."/>
            <person name="Ho S."/>
            <person name="Holmes S."/>
            <person name="Hunt S.E."/>
            <person name="Jones M.C."/>
            <person name="Kershaw J."/>
            <person name="Kimberley A.M."/>
            <person name="King A."/>
            <person name="Laird G.K."/>
            <person name="Langford C.F."/>
            <person name="Leversha M.A."/>
            <person name="Lloyd C."/>
            <person name="Lloyd D.M."/>
            <person name="Martyn I.D."/>
            <person name="Mashreghi-Mohammadi M."/>
            <person name="Matthews L.H."/>
            <person name="Mccann O.T."/>
            <person name="Mcclay J."/>
            <person name="Mclaren S."/>
            <person name="McMurray A.A."/>
            <person name="Milne S.A."/>
            <person name="Mortimore B.J."/>
            <person name="Odell C.N."/>
            <person name="Pavitt R."/>
            <person name="Pearce A.V."/>
            <person name="Pearson D."/>
            <person name="Phillimore B.J.C.T."/>
            <person name="Phillips S.H."/>
            <person name="Plumb R.W."/>
            <person name="Ramsay H."/>
            <person name="Ramsey Y."/>
            <person name="Rogers L."/>
            <person name="Ross M.T."/>
            <person name="Scott C.E."/>
            <person name="Sehra H.K."/>
            <person name="Skuce C.D."/>
            <person name="Smalley S."/>
            <person name="Smith M.L."/>
            <person name="Soderlund C."/>
            <person name="Spragon L."/>
            <person name="Steward C.A."/>
            <person name="Sulston J.E."/>
            <person name="Swann R.M."/>
            <person name="Vaudin M."/>
            <person name="Wall M."/>
            <person name="Wallis J.M."/>
            <person name="Whiteley M.N."/>
            <person name="Willey D.L."/>
            <person name="Williams L."/>
            <person name="Williams S.A."/>
            <person name="Williamson H."/>
            <person name="Wilmer T.E."/>
            <person name="Wilming L."/>
            <person name="Wright C.L."/>
            <person name="Hubbard T."/>
            <person name="Bentley D.R."/>
            <person name="Beck S."/>
            <person name="Rogers J."/>
            <person name="Shimizu N."/>
            <person name="Minoshima S."/>
            <person name="Kawasaki K."/>
            <person name="Sasaki T."/>
            <person name="Asakawa S."/>
            <person name="Kudoh J."/>
            <person name="Shintani A."/>
            <person name="Shibuya K."/>
            <person name="Yoshizaki Y."/>
            <person name="Aoki N."/>
            <person name="Mitsuyama S."/>
            <person name="Roe B.A."/>
            <person name="Chen F."/>
            <person name="Chu L."/>
            <person name="Crabtree J."/>
            <person name="Deschamps S."/>
            <person name="Do A."/>
            <person name="Do T."/>
            <person name="Dorman A."/>
            <person name="Fang F."/>
            <person name="Fu Y."/>
            <person name="Hu P."/>
            <person name="Hua A."/>
            <person name="Kenton S."/>
            <person name="Lai H."/>
            <person name="Lao H.I."/>
            <person name="Lewis J."/>
            <person name="Lewis S."/>
            <person name="Lin S.-P."/>
            <person name="Loh P."/>
            <person name="Malaj E."/>
            <person name="Nguyen T."/>
            <person name="Pan H."/>
            <person name="Phan S."/>
            <person name="Qi S."/>
            <person name="Qian Y."/>
            <person name="Ray L."/>
            <person name="Ren Q."/>
            <person name="Shaull S."/>
            <person name="Sloan D."/>
            <person name="Song L."/>
            <person name="Wang Q."/>
            <person name="Wang Y."/>
            <person name="Wang Z."/>
            <person name="White J."/>
            <person name="Willingham D."/>
            <person name="Wu H."/>
            <person name="Yao Z."/>
            <person name="Zhan M."/>
            <person name="Zhang G."/>
            <person name="Chissoe S."/>
            <person name="Murray J."/>
            <person name="Miller N."/>
            <person name="Minx P."/>
            <person name="Fulton R."/>
            <person name="Johnson D."/>
            <person name="Bemis G."/>
            <person name="Bentley D."/>
            <person name="Bradshaw H."/>
            <person name="Bourne S."/>
            <person name="Cordes M."/>
            <person name="Du Z."/>
            <person name="Fulton L."/>
            <person name="Goela D."/>
            <person name="Graves T."/>
            <person name="Hawkins J."/>
            <person name="Hinds K."/>
            <person name="Kemp K."/>
            <person name="Latreille P."/>
            <person name="Layman D."/>
            <person name="Ozersky P."/>
            <person name="Rohlfing T."/>
            <person name="Scheet P."/>
            <person name="Walker C."/>
            <person name="Wamsley A."/>
            <person name="Wohldmann P."/>
            <person name="Pepin K."/>
            <person name="Nelson J."/>
            <person name="Korf I."/>
            <person name="Bedell J.A."/>
            <person name="Hillier L.W."/>
            <person name="Mardis E."/>
            <person name="Waterston R."/>
            <person name="Wilson R."/>
            <person name="Emanuel B.S."/>
            <person name="Shaikh T."/>
            <person name="Kurahashi H."/>
            <person name="Saitta S."/>
            <person name="Budarf M.L."/>
            <person name="McDermid H.E."/>
            <person name="Johnson A."/>
            <person name="Wong A.C.C."/>
            <person name="Morrow B.E."/>
            <person name="Edelmann L."/>
            <person name="Kim U.J."/>
            <person name="Shizuya H."/>
            <person name="Simon M.I."/>
            <person name="Dumanski J.P."/>
            <person name="Peyrard M."/>
            <person name="Kedra D."/>
            <person name="Seroussi E."/>
            <person name="Fransson I."/>
            <person name="Tapia I."/>
            <person name="Bruder C.E."/>
            <person name="O'Brien K.P."/>
            <person name="Wilkinson P."/>
            <person name="Bodenteich A."/>
            <person name="Hartman K."/>
            <person name="Hu X."/>
            <person name="Khan A.S."/>
            <person name="Lane L."/>
            <person name="Tilahun Y."/>
            <person name="Wright H."/>
        </authorList>
    </citation>
    <scope>NUCLEOTIDE SEQUENCE [LARGE SCALE GENOMIC DNA]</scope>
</reference>
<reference key="4">
    <citation type="journal article" date="2004" name="Genome Res.">
        <title>The status, quality, and expansion of the NIH full-length cDNA project: the Mammalian Gene Collection (MGC).</title>
        <authorList>
            <consortium name="The MGC Project Team"/>
        </authorList>
    </citation>
    <scope>NUCLEOTIDE SEQUENCE [LARGE SCALE MRNA] (ISOFORM 1)</scope>
    <source>
        <tissue>Brain</tissue>
    </source>
</reference>
<gene>
    <name type="primary">MPPED1</name>
    <name type="synonym">C22orf1</name>
    <name type="synonym">FAM1A</name>
</gene>
<keyword id="KW-0025">Alternative splicing</keyword>
<keyword id="KW-0378">Hydrolase</keyword>
<keyword id="KW-1267">Proteomics identification</keyword>
<keyword id="KW-1185">Reference proteome</keyword>
<name>MPPD1_HUMAN</name>
<evidence type="ECO:0000250" key="1"/>
<evidence type="ECO:0000303" key="2">
    <source>
    </source>
</evidence>
<evidence type="ECO:0000305" key="3"/>
<dbReference type="EC" id="3.1.-.-"/>
<dbReference type="EMBL" id="U84894">
    <property type="protein sequence ID" value="AAC51673.2"/>
    <property type="status" value="ALT_FRAME"/>
    <property type="molecule type" value="mRNA"/>
</dbReference>
<dbReference type="EMBL" id="AK289774">
    <property type="protein sequence ID" value="BAF82463.1"/>
    <property type="molecule type" value="mRNA"/>
</dbReference>
<dbReference type="EMBL" id="AK290541">
    <property type="protein sequence ID" value="BAF83230.1"/>
    <property type="molecule type" value="mRNA"/>
</dbReference>
<dbReference type="EMBL" id="AK294912">
    <property type="protein sequence ID" value="BAG57999.1"/>
    <property type="molecule type" value="mRNA"/>
</dbReference>
<dbReference type="EMBL" id="AK295077">
    <property type="protein sequence ID" value="BAH11965.1"/>
    <property type="molecule type" value="mRNA"/>
</dbReference>
<dbReference type="EMBL" id="CU137653">
    <property type="protein sequence ID" value="CAQ06857.1"/>
    <property type="molecule type" value="Genomic_DNA"/>
</dbReference>
<dbReference type="EMBL" id="AL049708">
    <property type="protein sequence ID" value="CAQ06857.1"/>
    <property type="status" value="JOINED"/>
    <property type="molecule type" value="Genomic_DNA"/>
</dbReference>
<dbReference type="EMBL" id="AL096759">
    <property type="protein sequence ID" value="CAQ06857.1"/>
    <property type="status" value="JOINED"/>
    <property type="molecule type" value="Genomic_DNA"/>
</dbReference>
<dbReference type="EMBL" id="BX546033">
    <property type="protein sequence ID" value="CAQ06857.1"/>
    <property type="status" value="JOINED"/>
    <property type="molecule type" value="Genomic_DNA"/>
</dbReference>
<dbReference type="EMBL" id="CR377231">
    <property type="protein sequence ID" value="CAQ06857.1"/>
    <property type="status" value="JOINED"/>
    <property type="molecule type" value="Genomic_DNA"/>
</dbReference>
<dbReference type="EMBL" id="Z82172">
    <property type="protein sequence ID" value="CAQ06857.1"/>
    <property type="status" value="JOINED"/>
    <property type="molecule type" value="Genomic_DNA"/>
</dbReference>
<dbReference type="EMBL" id="AL049708">
    <property type="protein sequence ID" value="CAQ08121.1"/>
    <property type="molecule type" value="Genomic_DNA"/>
</dbReference>
<dbReference type="EMBL" id="AL096759">
    <property type="protein sequence ID" value="CAQ08121.1"/>
    <property type="status" value="JOINED"/>
    <property type="molecule type" value="Genomic_DNA"/>
</dbReference>
<dbReference type="EMBL" id="BX546033">
    <property type="protein sequence ID" value="CAQ08121.1"/>
    <property type="status" value="JOINED"/>
    <property type="molecule type" value="Genomic_DNA"/>
</dbReference>
<dbReference type="EMBL" id="CR377231">
    <property type="protein sequence ID" value="CAQ08121.1"/>
    <property type="status" value="JOINED"/>
    <property type="molecule type" value="Genomic_DNA"/>
</dbReference>
<dbReference type="EMBL" id="CU137653">
    <property type="protein sequence ID" value="CAQ08121.1"/>
    <property type="status" value="JOINED"/>
    <property type="molecule type" value="Genomic_DNA"/>
</dbReference>
<dbReference type="EMBL" id="Z82172">
    <property type="protein sequence ID" value="CAQ08121.1"/>
    <property type="status" value="JOINED"/>
    <property type="molecule type" value="Genomic_DNA"/>
</dbReference>
<dbReference type="EMBL" id="CR377231">
    <property type="protein sequence ID" value="CAQ08182.1"/>
    <property type="molecule type" value="Genomic_DNA"/>
</dbReference>
<dbReference type="EMBL" id="AL049708">
    <property type="protein sequence ID" value="CAQ08182.1"/>
    <property type="status" value="JOINED"/>
    <property type="molecule type" value="Genomic_DNA"/>
</dbReference>
<dbReference type="EMBL" id="AL096759">
    <property type="protein sequence ID" value="CAQ08182.1"/>
    <property type="status" value="JOINED"/>
    <property type="molecule type" value="Genomic_DNA"/>
</dbReference>
<dbReference type="EMBL" id="BX546033">
    <property type="protein sequence ID" value="CAQ08182.1"/>
    <property type="status" value="JOINED"/>
    <property type="molecule type" value="Genomic_DNA"/>
</dbReference>
<dbReference type="EMBL" id="CU137653">
    <property type="protein sequence ID" value="CAQ08182.1"/>
    <property type="status" value="JOINED"/>
    <property type="molecule type" value="Genomic_DNA"/>
</dbReference>
<dbReference type="EMBL" id="Z82172">
    <property type="protein sequence ID" value="CAQ08182.1"/>
    <property type="status" value="JOINED"/>
    <property type="molecule type" value="Genomic_DNA"/>
</dbReference>
<dbReference type="EMBL" id="BX546033">
    <property type="protein sequence ID" value="CAQ08847.1"/>
    <property type="molecule type" value="Genomic_DNA"/>
</dbReference>
<dbReference type="EMBL" id="AL049708">
    <property type="protein sequence ID" value="CAQ08847.1"/>
    <property type="status" value="JOINED"/>
    <property type="molecule type" value="Genomic_DNA"/>
</dbReference>
<dbReference type="EMBL" id="AL096759">
    <property type="protein sequence ID" value="CAQ08847.1"/>
    <property type="status" value="JOINED"/>
    <property type="molecule type" value="Genomic_DNA"/>
</dbReference>
<dbReference type="EMBL" id="CR377231">
    <property type="protein sequence ID" value="CAQ08847.1"/>
    <property type="status" value="JOINED"/>
    <property type="molecule type" value="Genomic_DNA"/>
</dbReference>
<dbReference type="EMBL" id="CU137653">
    <property type="protein sequence ID" value="CAQ08847.1"/>
    <property type="status" value="JOINED"/>
    <property type="molecule type" value="Genomic_DNA"/>
</dbReference>
<dbReference type="EMBL" id="Z82172">
    <property type="protein sequence ID" value="CAQ08847.1"/>
    <property type="status" value="JOINED"/>
    <property type="molecule type" value="Genomic_DNA"/>
</dbReference>
<dbReference type="EMBL" id="Z82172">
    <property type="protein sequence ID" value="CAQ10809.1"/>
    <property type="molecule type" value="Genomic_DNA"/>
</dbReference>
<dbReference type="EMBL" id="AL049708">
    <property type="protein sequence ID" value="CAQ10809.1"/>
    <property type="status" value="JOINED"/>
    <property type="molecule type" value="Genomic_DNA"/>
</dbReference>
<dbReference type="EMBL" id="AL096759">
    <property type="protein sequence ID" value="CAQ10809.1"/>
    <property type="status" value="JOINED"/>
    <property type="molecule type" value="Genomic_DNA"/>
</dbReference>
<dbReference type="EMBL" id="BX546033">
    <property type="protein sequence ID" value="CAQ10809.1"/>
    <property type="status" value="JOINED"/>
    <property type="molecule type" value="Genomic_DNA"/>
</dbReference>
<dbReference type="EMBL" id="CR377231">
    <property type="protein sequence ID" value="CAQ10809.1"/>
    <property type="status" value="JOINED"/>
    <property type="molecule type" value="Genomic_DNA"/>
</dbReference>
<dbReference type="EMBL" id="CU137653">
    <property type="protein sequence ID" value="CAQ10809.1"/>
    <property type="status" value="JOINED"/>
    <property type="molecule type" value="Genomic_DNA"/>
</dbReference>
<dbReference type="EMBL" id="BC028035">
    <property type="protein sequence ID" value="AAH28035.1"/>
    <property type="molecule type" value="mRNA"/>
</dbReference>
<dbReference type="CCDS" id="CCDS46723.1">
    <molecule id="O15442-1"/>
</dbReference>
<dbReference type="RefSeq" id="NP_001037835.1">
    <molecule id="O15442-1"/>
    <property type="nucleotide sequence ID" value="NM_001044370.2"/>
</dbReference>
<dbReference type="RefSeq" id="NP_001349715.1">
    <molecule id="O15442-1"/>
    <property type="nucleotide sequence ID" value="NM_001362786.2"/>
</dbReference>
<dbReference type="RefSeq" id="XP_011528669.1">
    <property type="nucleotide sequence ID" value="XM_011530367.2"/>
</dbReference>
<dbReference type="SMR" id="O15442"/>
<dbReference type="BioGRID" id="107213">
    <property type="interactions" value="41"/>
</dbReference>
<dbReference type="FunCoup" id="O15442">
    <property type="interactions" value="21"/>
</dbReference>
<dbReference type="IntAct" id="O15442">
    <property type="interactions" value="34"/>
</dbReference>
<dbReference type="MINT" id="O15442"/>
<dbReference type="STRING" id="9606.ENSP00000388137"/>
<dbReference type="PhosphoSitePlus" id="O15442"/>
<dbReference type="BioMuta" id="MPPED1"/>
<dbReference type="jPOST" id="O15442"/>
<dbReference type="MassIVE" id="O15442"/>
<dbReference type="PaxDb" id="9606-ENSP00000388137"/>
<dbReference type="PeptideAtlas" id="O15442"/>
<dbReference type="ProteomicsDB" id="48671">
    <molecule id="O15442-1"/>
</dbReference>
<dbReference type="ProteomicsDB" id="6458"/>
<dbReference type="Antibodypedia" id="27528">
    <property type="antibodies" value="125 antibodies from 20 providers"/>
</dbReference>
<dbReference type="DNASU" id="758"/>
<dbReference type="Ensembl" id="ENST00000417669.6">
    <molecule id="O15442-1"/>
    <property type="protein sequence ID" value="ENSP00000388137.1"/>
    <property type="gene ID" value="ENSG00000186732.14"/>
</dbReference>
<dbReference type="Ensembl" id="ENST00000443721.2">
    <molecule id="O15442-1"/>
    <property type="protein sequence ID" value="ENSP00000400686.1"/>
    <property type="gene ID" value="ENSG00000186732.14"/>
</dbReference>
<dbReference type="GeneID" id="758"/>
<dbReference type="KEGG" id="hsa:758"/>
<dbReference type="MANE-Select" id="ENST00000443721.2">
    <property type="protein sequence ID" value="ENSP00000400686.1"/>
    <property type="RefSeq nucleotide sequence ID" value="NM_001044370.2"/>
    <property type="RefSeq protein sequence ID" value="NP_001037835.1"/>
</dbReference>
<dbReference type="UCSC" id="uc011apv.3">
    <molecule id="O15442-1"/>
    <property type="organism name" value="human"/>
</dbReference>
<dbReference type="AGR" id="HGNC:1306"/>
<dbReference type="CTD" id="758"/>
<dbReference type="DisGeNET" id="758"/>
<dbReference type="GeneCards" id="MPPED1"/>
<dbReference type="HGNC" id="HGNC:1306">
    <property type="gene designation" value="MPPED1"/>
</dbReference>
<dbReference type="HPA" id="ENSG00000186732">
    <property type="expression patterns" value="Group enriched (brain, liver)"/>
</dbReference>
<dbReference type="MIM" id="602112">
    <property type="type" value="gene"/>
</dbReference>
<dbReference type="neXtProt" id="NX_O15442"/>
<dbReference type="OpenTargets" id="ENSG00000186732"/>
<dbReference type="PharmGKB" id="PA25880"/>
<dbReference type="VEuPathDB" id="HostDB:ENSG00000186732"/>
<dbReference type="eggNOG" id="KOG3947">
    <property type="taxonomic scope" value="Eukaryota"/>
</dbReference>
<dbReference type="GeneTree" id="ENSGT00390000007681"/>
<dbReference type="HOGENOM" id="CLU_041441_1_0_1"/>
<dbReference type="InParanoid" id="O15442"/>
<dbReference type="OMA" id="IKTRICM"/>
<dbReference type="OrthoDB" id="630188at2759"/>
<dbReference type="PAN-GO" id="O15442">
    <property type="GO annotations" value="0 GO annotations based on evolutionary models"/>
</dbReference>
<dbReference type="PhylomeDB" id="O15442"/>
<dbReference type="TreeFam" id="TF314305"/>
<dbReference type="PathwayCommons" id="O15442"/>
<dbReference type="SignaLink" id="O15442"/>
<dbReference type="BioGRID-ORCS" id="758">
    <property type="hits" value="10 hits in 1142 CRISPR screens"/>
</dbReference>
<dbReference type="ChiTaRS" id="MPPED1">
    <property type="organism name" value="human"/>
</dbReference>
<dbReference type="GenomeRNAi" id="758"/>
<dbReference type="Pharos" id="O15442">
    <property type="development level" value="Tdark"/>
</dbReference>
<dbReference type="PRO" id="PR:O15442"/>
<dbReference type="Proteomes" id="UP000005640">
    <property type="component" value="Chromosome 22"/>
</dbReference>
<dbReference type="RNAct" id="O15442">
    <property type="molecule type" value="protein"/>
</dbReference>
<dbReference type="Bgee" id="ENSG00000186732">
    <property type="expression patterns" value="Expressed in cortical plate and 92 other cell types or tissues"/>
</dbReference>
<dbReference type="ExpressionAtlas" id="O15442">
    <property type="expression patterns" value="baseline and differential"/>
</dbReference>
<dbReference type="GO" id="GO:0016787">
    <property type="term" value="F:hydrolase activity"/>
    <property type="evidence" value="ECO:0007669"/>
    <property type="project" value="UniProtKB-KW"/>
</dbReference>
<dbReference type="CDD" id="cd07379">
    <property type="entry name" value="MPP_239FB"/>
    <property type="match status" value="1"/>
</dbReference>
<dbReference type="Gene3D" id="3.60.21.10">
    <property type="match status" value="1"/>
</dbReference>
<dbReference type="InterPro" id="IPR024201">
    <property type="entry name" value="Calcineurin-like_Pesterase"/>
</dbReference>
<dbReference type="InterPro" id="IPR004843">
    <property type="entry name" value="Calcineurin-like_PHP_ApaH"/>
</dbReference>
<dbReference type="InterPro" id="IPR029052">
    <property type="entry name" value="Metallo-depent_PP-like"/>
</dbReference>
<dbReference type="InterPro" id="IPR051693">
    <property type="entry name" value="UPF0046_metallophosphoest"/>
</dbReference>
<dbReference type="PANTHER" id="PTHR12905">
    <property type="entry name" value="METALLOPHOSPHOESTERASE"/>
    <property type="match status" value="1"/>
</dbReference>
<dbReference type="PANTHER" id="PTHR12905:SF31">
    <property type="entry name" value="METALLOPHOSPHOESTERASE DOMAIN-CONTAINING PROTEIN 1"/>
    <property type="match status" value="1"/>
</dbReference>
<dbReference type="Pfam" id="PF00149">
    <property type="entry name" value="Metallophos"/>
    <property type="match status" value="1"/>
</dbReference>
<dbReference type="PIRSF" id="PIRSF035808">
    <property type="entry name" value="Pdiesterase_Brain_239"/>
    <property type="match status" value="1"/>
</dbReference>
<dbReference type="SUPFAM" id="SSF56300">
    <property type="entry name" value="Metallo-dependent phosphatases"/>
    <property type="match status" value="1"/>
</dbReference>